<keyword id="KW-0040">ANK repeat</keyword>
<keyword id="KW-1185">Reference proteome</keyword>
<keyword id="KW-0677">Repeat</keyword>
<gene>
    <name type="ordered locus">MIMI_R840</name>
</gene>
<feature type="chain" id="PRO_0000067209" description="Putative ankyrin repeat protein R840">
    <location>
        <begin position="1"/>
        <end position="526"/>
    </location>
</feature>
<feature type="repeat" description="ANK 1">
    <location>
        <begin position="78"/>
        <end position="107"/>
    </location>
</feature>
<feature type="repeat" description="ANK 2">
    <location>
        <begin position="108"/>
        <end position="137"/>
    </location>
</feature>
<feature type="repeat" description="ANK 3">
    <location>
        <begin position="139"/>
        <end position="167"/>
    </location>
</feature>
<feature type="repeat" description="ANK 4">
    <location>
        <begin position="169"/>
        <end position="197"/>
    </location>
</feature>
<feature type="repeat" description="ANK 5">
    <location>
        <begin position="198"/>
        <end position="227"/>
    </location>
</feature>
<feature type="repeat" description="ANK 6">
    <location>
        <begin position="229"/>
        <end position="255"/>
    </location>
</feature>
<feature type="repeat" description="ANK 7">
    <location>
        <begin position="256"/>
        <end position="285"/>
    </location>
</feature>
<feature type="repeat" description="ANK 8">
    <location>
        <begin position="286"/>
        <end position="315"/>
    </location>
</feature>
<feature type="repeat" description="ANK 9">
    <location>
        <begin position="317"/>
        <end position="345"/>
    </location>
</feature>
<feature type="repeat" description="ANK 10">
    <location>
        <begin position="346"/>
        <end position="375"/>
    </location>
</feature>
<feature type="repeat" description="ANK 11">
    <location>
        <begin position="376"/>
        <end position="405"/>
    </location>
</feature>
<feature type="repeat" description="ANK 12">
    <location>
        <begin position="406"/>
        <end position="435"/>
    </location>
</feature>
<feature type="repeat" description="ANK 13">
    <location>
        <begin position="437"/>
        <end position="467"/>
    </location>
</feature>
<feature type="repeat" description="ANK 14">
    <location>
        <begin position="468"/>
        <end position="497"/>
    </location>
</feature>
<feature type="repeat" description="ANK 15">
    <location>
        <begin position="499"/>
        <end position="526"/>
    </location>
</feature>
<sequence>MYDNLPPEIWTNIISYTNEFNLLFTNSNFFSLFNLINTKINIIEHVIKREHLSVQKYIDQLKKNCNEIVSKKFFNDLTLNECLFISCKRGRNDFVKYFVSKGANIRSRDNFAIKLACEHGHIEVVKYLIDNGVDIRSEKNYAVRIACNNGHIDIVKLLISKGANIRDYDNCAIKWASENGHIEIVKILVSQGYDSTSNFNEPVILAVKNGHLEVVKYLVSQSDRCRNNSAIISAAENGHIEIVKFLASRGSNIRIDDDYTIRIASGNGHLEVVKFLVSKGCNIRSEIDHAVQWASTNGHLEVVEYLVSQGADIKSEYDRSVRCASQNGHIEVVKYLVSQGANIRNINDYAVRYASENGHIEVVEYLVSQGANIRVDNDSPLLRACLKGHIKVVKFLVSSGADIRVNNYQPLLIAAGNGHLEILKYLVSQGVNVSIINVPLVGIACIDGYGYFEIVKYLVSIGADINLADDMAIRLASEYGHLDIVKYLVENGANVRAENDYAIKQAHRKGHQEVVNYLLSKGAILS</sequence>
<protein>
    <recommendedName>
        <fullName>Putative ankyrin repeat protein R840</fullName>
    </recommendedName>
</protein>
<reference key="1">
    <citation type="journal article" date="2004" name="Science">
        <title>The 1.2-megabase genome sequence of Mimivirus.</title>
        <authorList>
            <person name="Raoult D."/>
            <person name="Audic S."/>
            <person name="Robert C."/>
            <person name="Abergel C."/>
            <person name="Renesto P."/>
            <person name="Ogata H."/>
            <person name="La Scola B."/>
            <person name="Susan M."/>
            <person name="Claverie J.-M."/>
        </authorList>
    </citation>
    <scope>NUCLEOTIDE SEQUENCE [LARGE SCALE GENOMIC DNA]</scope>
    <source>
        <strain>Rowbotham-Bradford</strain>
    </source>
</reference>
<dbReference type="EMBL" id="AY653733">
    <property type="protein sequence ID" value="AAV51098.1"/>
    <property type="molecule type" value="Genomic_DNA"/>
</dbReference>
<dbReference type="SMR" id="Q5URB9"/>
<dbReference type="KEGG" id="vg:9925503"/>
<dbReference type="OrthoDB" id="38654at10239"/>
<dbReference type="Proteomes" id="UP000001134">
    <property type="component" value="Genome"/>
</dbReference>
<dbReference type="Gene3D" id="1.25.40.20">
    <property type="entry name" value="Ankyrin repeat-containing domain"/>
    <property type="match status" value="4"/>
</dbReference>
<dbReference type="InterPro" id="IPR002110">
    <property type="entry name" value="Ankyrin_rpt"/>
</dbReference>
<dbReference type="InterPro" id="IPR036770">
    <property type="entry name" value="Ankyrin_rpt-contain_sf"/>
</dbReference>
<dbReference type="InterPro" id="IPR052050">
    <property type="entry name" value="SecEffector_AnkRepeat"/>
</dbReference>
<dbReference type="PANTHER" id="PTHR46586">
    <property type="entry name" value="ANKYRIN REPEAT-CONTAINING PROTEIN"/>
    <property type="match status" value="1"/>
</dbReference>
<dbReference type="PANTHER" id="PTHR46586:SF3">
    <property type="entry name" value="ANKYRIN REPEAT-CONTAINING PROTEIN"/>
    <property type="match status" value="1"/>
</dbReference>
<dbReference type="Pfam" id="PF00023">
    <property type="entry name" value="Ank"/>
    <property type="match status" value="1"/>
</dbReference>
<dbReference type="Pfam" id="PF12796">
    <property type="entry name" value="Ank_2"/>
    <property type="match status" value="6"/>
</dbReference>
<dbReference type="SMART" id="SM00248">
    <property type="entry name" value="ANK"/>
    <property type="match status" value="15"/>
</dbReference>
<dbReference type="SUPFAM" id="SSF48403">
    <property type="entry name" value="Ankyrin repeat"/>
    <property type="match status" value="2"/>
</dbReference>
<dbReference type="PROSITE" id="PS50297">
    <property type="entry name" value="ANK_REP_REGION"/>
    <property type="match status" value="1"/>
</dbReference>
<dbReference type="PROSITE" id="PS50088">
    <property type="entry name" value="ANK_REPEAT"/>
    <property type="match status" value="9"/>
</dbReference>
<name>YR840_MIMIV</name>
<proteinExistence type="predicted"/>
<organismHost>
    <name type="scientific">Acanthamoeba polyphaga</name>
    <name type="common">Amoeba</name>
    <dbReference type="NCBI Taxonomy" id="5757"/>
</organismHost>
<organism>
    <name type="scientific">Acanthamoeba polyphaga mimivirus</name>
    <name type="common">APMV</name>
    <dbReference type="NCBI Taxonomy" id="212035"/>
    <lineage>
        <taxon>Viruses</taxon>
        <taxon>Varidnaviria</taxon>
        <taxon>Bamfordvirae</taxon>
        <taxon>Nucleocytoviricota</taxon>
        <taxon>Megaviricetes</taxon>
        <taxon>Imitervirales</taxon>
        <taxon>Mimiviridae</taxon>
        <taxon>Megamimivirinae</taxon>
        <taxon>Mimivirus</taxon>
        <taxon>Mimivirus bradfordmassiliense</taxon>
    </lineage>
</organism>
<accession>Q5URB9</accession>